<proteinExistence type="evidence at protein level"/>
<reference key="1">
    <citation type="journal article" date="1995" name="J. Virol.">
        <title>Nucleotide sequence and protein analysis of a complex piscine retrovirus, walleye dermal sarcoma virus.</title>
        <authorList>
            <person name="Holzschu D.L."/>
            <person name="Martineau D."/>
            <person name="Fodor S.K."/>
            <person name="Vogt V.M."/>
            <person name="Bowser P.R."/>
            <person name="Casey J.W."/>
        </authorList>
    </citation>
    <scope>NUCLEOTIDE SEQUENCE [GENOMIC RNA]</scope>
    <scope>PROTEOLYTIC PROCESSING OF POLYPROTEIN</scope>
</reference>
<reference key="2">
    <citation type="submission" date="1997-11" db="EMBL/GenBank/DDBJ databases">
        <authorList>
            <person name="Chappey C."/>
        </authorList>
    </citation>
    <scope>NUCLEOTIDE SEQUENCE [GENOMIC RNA]</scope>
</reference>
<reference key="3">
    <citation type="journal article" date="2007" name="J. Gen. Virol.">
        <title>Establishment of productively infected walleye dermal sarcoma explant cells.</title>
        <authorList>
            <person name="Rovnak J."/>
            <person name="Casey R.N."/>
            <person name="Brewster C.D."/>
            <person name="Casey J.W."/>
            <person name="Quackenbush S.L."/>
        </authorList>
    </citation>
    <scope>SEQUENCE REVISION</scope>
</reference>
<sequence length="1160" mass="130922">MDTPGSLQVIAIISLLLVGGASQPATFLEKALPTDGPSLETIEHKTEMVNTTRSEEQSPVRPSKTRQQLIDETPEICANAWVIRLITEFPTELGNMSQKQKTIAIQVHNTTMTMEETVFSLVSHVNKKNYEIHNVSGICTKYQLVPGNFTCSTRKCISQTKEKRIISTTVKDTYEVYLPFAWSQKPTGGDKYPEPQIGYNTGTGRLNQWNKDEFVIKQCRKKRGKRQITVPNSTLSPTGTTDFTKFTPNPISPNSTALNELEQKTTPIGTEQPFNNEKWQNLIFGNIVTKMDPQCEAELFQQFNISDKTVQVEFKVTSLPGQNISCQAIYNTEHGINIENKNCVISLIKENRKIKAHAYITRTGSYEWYAQQVTSKGIIQEVRNLVTIVECECPIVKPLPQGGIIPLTMPMRVLTNPSPILIHSALKFDLSKFGLSPCSFSPMEWQTYITKPLKRAMHGFEVHQRKKRDLGIGLHSTLNSWWNGANSLGLTVESADRQKYDQKILKVLQNLAVQQRTDVKNQQTLGKALETPIYTITLQLADSLTAAILKHEQQQNVGITCKDIAILTVTQIATYLRDIQHEHLPVWFIEQITNQILLPVGQVIMPEITAPPILNPLIGWNQSVLVIGLTHQLTITTVQQPLYKAANMGNFQDWTPFPPFILANKTHGFSIDCPIMRNSFLCHTLPTPVKLSEWERSTSTIYQTSPQVWITPEGKACLNHRNITVQDRTCLINKPGCFIPKHPWSAGKQTIVPTQYIQQNFVPDTIDTEDNQTRVLQKEMIEAISKAKRDYGVLKQGQIALIRHHEAITTILGQEATYSIKETQALISSIEQEAWYNNLFSWYDGSVWSQLQLIIVVITCTIPLLWVLNTCLFFKLRRAIRRERDNNIVVEYQAQTRGRRTHMTEPITKKQRAKLLRHAKTNRRLPRSLRATPAVSAFEMVTFDPQEETVEINRIDPSHENNDHGGPMNMAPIISADSYALPTPYITIMLDRELLNQGMRKVITLLNDPAREVFNKAYNLVTTNHFTLAYGCDESAGWVNQHAEYMGKPVIVTLAGLVITPVGLAWIPLPQQEPLEKLFMVPNSMPHVTVAMADYHETKEMGKIVKDINNEELLLVKPQLFKWGPEGFFVACPLVIRGVVTGHSLLHIACPATAVQAEGT</sequence>
<accession>Q88938</accession>
<organism>
    <name type="scientific">Walleye dermal sarcoma virus</name>
    <name type="common">WDSV</name>
    <dbReference type="NCBI Taxonomy" id="39720"/>
    <lineage>
        <taxon>Viruses</taxon>
        <taxon>Riboviria</taxon>
        <taxon>Pararnavirae</taxon>
        <taxon>Artverviricota</taxon>
        <taxon>Revtraviricetes</taxon>
        <taxon>Ortervirales</taxon>
        <taxon>Retroviridae</taxon>
        <taxon>Orthoretrovirinae</taxon>
        <taxon>Epsilonretrovirus</taxon>
    </lineage>
</organism>
<comment type="function">
    <molecule>Surface protein</molecule>
    <text evidence="1">(SU) attaches the virus to the host cell by binding to its receptor. This interaction triggers the refolding of the transmembrane protein (TM) and is thought to activate its fusogenic potential by unmasking its fusion peptide. Fusion occurs at the host cell plasma membrane (By similarity).</text>
</comment>
<comment type="function">
    <molecule>Transmembrane protein</molecule>
    <text evidence="1">(TM) acts as a class I viral fusion protein. Under the current model, the protein has at least 3 conformational states: pre-fusion native state, pre-hairpin intermediate state, and post-fusion hairpin state. During viral and target cell membrane fusion, the coiled coil regions (heptad repeats) assume a trimer-of-hairpins structure, positioning the fusion peptide in close proximity to the C-terminal region of the ectodomain. The formation of this structure appears to drive apposition and subsequent fusion of viral and target cell membranes. Membranes fusion leads to delivery of the nucleocapsid into the cytoplasm (By similarity).</text>
</comment>
<comment type="subunit">
    <text evidence="1">The mature envelope protein (Env) consists of a trimer of SU-TM heterodimers attached by non-covalent interactions or by a labile interchain disulfide bond.</text>
</comment>
<comment type="subcellular location">
    <molecule>Transmembrane protein</molecule>
    <subcellularLocation>
        <location evidence="1">Virion membrane</location>
        <topology evidence="1">Multi-pass membrane protein</topology>
    </subcellularLocation>
    <subcellularLocation>
        <location evidence="1">Host cell membrane</location>
        <topology evidence="1">Multi-pass membrane protein</topology>
    </subcellularLocation>
</comment>
<comment type="subcellular location">
    <molecule>Surface protein</molecule>
    <subcellularLocation>
        <location>Virion membrane</location>
        <topology>Peripheral membrane protein</topology>
    </subcellularLocation>
    <subcellularLocation>
        <location evidence="1">Host cell membrane</location>
        <topology evidence="1">Peripheral membrane protein</topology>
    </subcellularLocation>
    <text evidence="1">The surface protein is not anchored to the viral envelope, but associates with the extravirion surface through its binding to TM. Both proteins are thought to be concentrated at the site of budding and incorporated into the virions possibly by contacts between the cytoplasmic tail of Env and the N-terminus of Gag (By similarity).</text>
</comment>
<comment type="PTM">
    <text evidence="1">Specific enzymatic cleavages in vivo yield mature proteins. Envelope glycoproteins are synthesized as an inactive precursor that is N-glycosylated and processed likely by host cell furin or by a furin-like protease in the Golgi to yield the mature SU and TM proteins. The cleavage site between SU and TM requires the minimal sequence [KR]-X-[KR]-R (By similarity).</text>
</comment>
<comment type="sequence caution" evidence="4">
    <conflict type="miscellaneous discrepancy">
        <sequence resource="EMBL-CDS" id="AAA99527"/>
    </conflict>
    <text>Several sequencing errors.</text>
</comment>
<comment type="sequence caution" evidence="4">
    <conflict type="miscellaneous discrepancy">
        <sequence resource="EMBL-CDS" id="AAC82608"/>
    </conflict>
    <text>Several sequencing errors.</text>
</comment>
<dbReference type="EMBL" id="L41838">
    <property type="protein sequence ID" value="AAA99527.1"/>
    <property type="status" value="ALT_SEQ"/>
    <property type="molecule type" value="Genomic_RNA"/>
</dbReference>
<dbReference type="EMBL" id="AF033822">
    <property type="protein sequence ID" value="AAC82608.1"/>
    <property type="status" value="ALT_SEQ"/>
    <property type="molecule type" value="Genomic_RNA"/>
</dbReference>
<dbReference type="PIR" id="T09395">
    <property type="entry name" value="T09395"/>
</dbReference>
<dbReference type="RefSeq" id="NP_045939.1">
    <property type="nucleotide sequence ID" value="NC_001867.1"/>
</dbReference>
<dbReference type="GlyCosmos" id="Q88938">
    <property type="glycosylation" value="13 sites, No reported glycans"/>
</dbReference>
<dbReference type="GeneID" id="1403498"/>
<dbReference type="KEGG" id="vg:1403498"/>
<dbReference type="Proteomes" id="UP000007081">
    <property type="component" value="Segment"/>
</dbReference>
<dbReference type="Proteomes" id="UP000008337">
    <property type="component" value="Genome"/>
</dbReference>
<dbReference type="GO" id="GO:0020002">
    <property type="term" value="C:host cell plasma membrane"/>
    <property type="evidence" value="ECO:0007669"/>
    <property type="project" value="UniProtKB-SubCell"/>
</dbReference>
<dbReference type="GO" id="GO:0016020">
    <property type="term" value="C:membrane"/>
    <property type="evidence" value="ECO:0007669"/>
    <property type="project" value="UniProtKB-KW"/>
</dbReference>
<dbReference type="GO" id="GO:0019031">
    <property type="term" value="C:viral envelope"/>
    <property type="evidence" value="ECO:0007669"/>
    <property type="project" value="UniProtKB-KW"/>
</dbReference>
<dbReference type="GO" id="GO:0055036">
    <property type="term" value="C:virion membrane"/>
    <property type="evidence" value="ECO:0007669"/>
    <property type="project" value="UniProtKB-SubCell"/>
</dbReference>
<dbReference type="GO" id="GO:0019064">
    <property type="term" value="P:fusion of virus membrane with host plasma membrane"/>
    <property type="evidence" value="ECO:0007669"/>
    <property type="project" value="UniProtKB-KW"/>
</dbReference>
<dbReference type="GO" id="GO:0046718">
    <property type="term" value="P:symbiont entry into host cell"/>
    <property type="evidence" value="ECO:0007669"/>
    <property type="project" value="UniProtKB-KW"/>
</dbReference>
<dbReference type="GO" id="GO:0019062">
    <property type="term" value="P:virion attachment to host cell"/>
    <property type="evidence" value="ECO:0007669"/>
    <property type="project" value="UniProtKB-KW"/>
</dbReference>
<feature type="signal peptide" evidence="2">
    <location>
        <begin position="1"/>
        <end position="22"/>
    </location>
</feature>
<feature type="chain" id="PRO_0000410600" description="Envelope glycoprotein" evidence="2">
    <location>
        <begin position="23"/>
        <end position="1160"/>
    </location>
</feature>
<feature type="chain" id="PRO_0000410601" description="Surface protein" evidence="2">
    <location>
        <begin position="34"/>
        <end position="468"/>
    </location>
</feature>
<feature type="chain" id="PRO_0000410602" description="Transmembrane protein" evidence="2">
    <location>
        <begin position="469"/>
        <end position="1160"/>
    </location>
</feature>
<feature type="topological domain" description="Extracellular" evidence="2">
    <location>
        <begin position="23"/>
        <end position="853"/>
    </location>
</feature>
<feature type="transmembrane region" description="Helical" evidence="2">
    <location>
        <begin position="854"/>
        <end position="874"/>
    </location>
</feature>
<feature type="topological domain" description="Cytoplasmic" evidence="2">
    <location>
        <begin position="875"/>
        <end position="1048"/>
    </location>
</feature>
<feature type="transmembrane region" description="Helical" evidence="2">
    <location>
        <begin position="1049"/>
        <end position="1069"/>
    </location>
</feature>
<feature type="topological domain" description="Extracellular" evidence="2">
    <location>
        <begin position="1070"/>
        <end position="1127"/>
    </location>
</feature>
<feature type="transmembrane region" description="Helical" evidence="2">
    <location>
        <begin position="1128"/>
        <end position="1148"/>
    </location>
</feature>
<feature type="topological domain" description="Cytoplasmic" evidence="2">
    <location>
        <begin position="1149"/>
        <end position="1160"/>
    </location>
</feature>
<feature type="region of interest" description="Disordered" evidence="3">
    <location>
        <begin position="230"/>
        <end position="251"/>
    </location>
</feature>
<feature type="glycosylation site" description="N-linked (GlcNAc...) asparagine; by host" evidence="2">
    <location>
        <position position="50"/>
    </location>
</feature>
<feature type="glycosylation site" description="N-linked (GlcNAc...) asparagine; by host" evidence="2">
    <location>
        <position position="95"/>
    </location>
</feature>
<feature type="glycosylation site" description="N-linked (GlcNAc...) asparagine; by host" evidence="2">
    <location>
        <position position="109"/>
    </location>
</feature>
<feature type="glycosylation site" description="N-linked (GlcNAc...) asparagine; by host" evidence="2">
    <location>
        <position position="134"/>
    </location>
</feature>
<feature type="glycosylation site" description="N-linked (GlcNAc...) asparagine; by host" evidence="2">
    <location>
        <position position="148"/>
    </location>
</feature>
<feature type="glycosylation site" description="N-linked (GlcNAc...) asparagine; by host" evidence="2">
    <location>
        <position position="232"/>
    </location>
</feature>
<feature type="glycosylation site" description="N-linked (GlcNAc...) asparagine; by host" evidence="2">
    <location>
        <position position="254"/>
    </location>
</feature>
<feature type="glycosylation site" description="N-linked (GlcNAc...) asparagine; by host" evidence="2">
    <location>
        <position position="304"/>
    </location>
</feature>
<feature type="glycosylation site" description="N-linked (GlcNAc...) asparagine; by host" evidence="2">
    <location>
        <position position="323"/>
    </location>
</feature>
<feature type="glycosylation site" description="N-linked (GlcNAc...) asparagine; by host" evidence="2">
    <location>
        <position position="621"/>
    </location>
</feature>
<feature type="glycosylation site" description="N-linked (GlcNAc...) asparagine; by host" evidence="2">
    <location>
        <position position="664"/>
    </location>
</feature>
<feature type="glycosylation site" description="N-linked (GlcNAc...) asparagine; by host" evidence="2">
    <location>
        <position position="722"/>
    </location>
</feature>
<feature type="glycosylation site" description="N-linked (GlcNAc...) asparagine; by host" evidence="2">
    <location>
        <position position="771"/>
    </location>
</feature>
<evidence type="ECO:0000250" key="1"/>
<evidence type="ECO:0000255" key="2"/>
<evidence type="ECO:0000256" key="3">
    <source>
        <dbReference type="SAM" id="MobiDB-lite"/>
    </source>
</evidence>
<evidence type="ECO:0000305" key="4"/>
<name>ENV_WDSV</name>
<keyword id="KW-0165">Cleavage on pair of basic residues</keyword>
<keyword id="KW-0175">Coiled coil</keyword>
<keyword id="KW-1169">Fusion of virus membrane with host cell membrane</keyword>
<keyword id="KW-1168">Fusion of virus membrane with host membrane</keyword>
<keyword id="KW-0325">Glycoprotein</keyword>
<keyword id="KW-1032">Host cell membrane</keyword>
<keyword id="KW-1043">Host membrane</keyword>
<keyword id="KW-0945">Host-virus interaction</keyword>
<keyword id="KW-0449">Lipoprotein</keyword>
<keyword id="KW-0472">Membrane</keyword>
<keyword id="KW-1185">Reference proteome</keyword>
<keyword id="KW-0732">Signal</keyword>
<keyword id="KW-0812">Transmembrane</keyword>
<keyword id="KW-1133">Transmembrane helix</keyword>
<keyword id="KW-1161">Viral attachment to host cell</keyword>
<keyword id="KW-0261">Viral envelope protein</keyword>
<keyword id="KW-1162">Viral penetration into host cytoplasm</keyword>
<keyword id="KW-0946">Virion</keyword>
<keyword id="KW-1160">Virus entry into host cell</keyword>
<organismHost>
    <name type="scientific">Sander vitreus</name>
    <name type="common">Walleye</name>
    <name type="synonym">Perca vitrea</name>
    <dbReference type="NCBI Taxonomy" id="283036"/>
</organismHost>
<gene>
    <name type="primary">env</name>
</gene>
<protein>
    <recommendedName>
        <fullName>Envelope glycoprotein</fullName>
    </recommendedName>
    <alternativeName>
        <fullName>Env polyprotein</fullName>
    </alternativeName>
    <component>
        <recommendedName>
            <fullName>Surface protein</fullName>
            <shortName>SU</shortName>
        </recommendedName>
    </component>
    <component>
        <recommendedName>
            <fullName>Transmembrane protein</fullName>
            <shortName>TM</shortName>
        </recommendedName>
    </component>
</protein>